<protein>
    <recommendedName>
        <fullName evidence="1">Large ribosomal subunit protein bL12</fullName>
    </recommendedName>
    <alternativeName>
        <fullName evidence="2">50S ribosomal protein L7/L12</fullName>
    </alternativeName>
</protein>
<comment type="function">
    <text evidence="1">Forms part of the ribosomal stalk which helps the ribosome interact with GTP-bound translation factors. Is thus essential for accurate translation.</text>
</comment>
<comment type="subunit">
    <text evidence="1">Homodimer. Part of the ribosomal stalk of the 50S ribosomal subunit. Forms a multimeric L10(L12)X complex, where L10 forms an elongated spine to which 2 to 4 L12 dimers bind in a sequential fashion. Binds GTP-bound translation factors.</text>
</comment>
<comment type="similarity">
    <text evidence="1">Belongs to the bacterial ribosomal protein bL12 family.</text>
</comment>
<name>RL7_RICAH</name>
<gene>
    <name evidence="1" type="primary">rplL</name>
    <name type="ordered locus">A1C_01005</name>
</gene>
<keyword id="KW-0687">Ribonucleoprotein</keyword>
<keyword id="KW-0689">Ribosomal protein</keyword>
<dbReference type="EMBL" id="CP000847">
    <property type="protein sequence ID" value="ABV74531.1"/>
    <property type="molecule type" value="Genomic_DNA"/>
</dbReference>
<dbReference type="RefSeq" id="WP_012013401.1">
    <property type="nucleotide sequence ID" value="NC_009881.1"/>
</dbReference>
<dbReference type="SMR" id="A8GMA6"/>
<dbReference type="STRING" id="293614.A1C_01005"/>
<dbReference type="KEGG" id="rak:A1C_01005"/>
<dbReference type="eggNOG" id="COG0222">
    <property type="taxonomic scope" value="Bacteria"/>
</dbReference>
<dbReference type="HOGENOM" id="CLU_086499_3_2_5"/>
<dbReference type="Proteomes" id="UP000006830">
    <property type="component" value="Chromosome"/>
</dbReference>
<dbReference type="GO" id="GO:0005737">
    <property type="term" value="C:cytoplasm"/>
    <property type="evidence" value="ECO:0007669"/>
    <property type="project" value="UniProtKB-ARBA"/>
</dbReference>
<dbReference type="GO" id="GO:1990904">
    <property type="term" value="C:ribonucleoprotein complex"/>
    <property type="evidence" value="ECO:0007669"/>
    <property type="project" value="UniProtKB-KW"/>
</dbReference>
<dbReference type="GO" id="GO:0005840">
    <property type="term" value="C:ribosome"/>
    <property type="evidence" value="ECO:0007669"/>
    <property type="project" value="UniProtKB-KW"/>
</dbReference>
<dbReference type="GO" id="GO:0003729">
    <property type="term" value="F:mRNA binding"/>
    <property type="evidence" value="ECO:0007669"/>
    <property type="project" value="TreeGrafter"/>
</dbReference>
<dbReference type="GO" id="GO:0003735">
    <property type="term" value="F:structural constituent of ribosome"/>
    <property type="evidence" value="ECO:0007669"/>
    <property type="project" value="InterPro"/>
</dbReference>
<dbReference type="GO" id="GO:0006412">
    <property type="term" value="P:translation"/>
    <property type="evidence" value="ECO:0007669"/>
    <property type="project" value="UniProtKB-UniRule"/>
</dbReference>
<dbReference type="CDD" id="cd00387">
    <property type="entry name" value="Ribosomal_L7_L12"/>
    <property type="match status" value="1"/>
</dbReference>
<dbReference type="FunFam" id="3.30.1390.10:FF:000001">
    <property type="entry name" value="50S ribosomal protein L7/L12"/>
    <property type="match status" value="1"/>
</dbReference>
<dbReference type="Gene3D" id="3.30.1390.10">
    <property type="match status" value="1"/>
</dbReference>
<dbReference type="Gene3D" id="1.20.5.710">
    <property type="entry name" value="Single helix bin"/>
    <property type="match status" value="1"/>
</dbReference>
<dbReference type="HAMAP" id="MF_00368">
    <property type="entry name" value="Ribosomal_bL12"/>
    <property type="match status" value="1"/>
</dbReference>
<dbReference type="InterPro" id="IPR000206">
    <property type="entry name" value="Ribosomal_bL12"/>
</dbReference>
<dbReference type="InterPro" id="IPR013823">
    <property type="entry name" value="Ribosomal_bL12_C"/>
</dbReference>
<dbReference type="InterPro" id="IPR014719">
    <property type="entry name" value="Ribosomal_bL12_C/ClpS-like"/>
</dbReference>
<dbReference type="InterPro" id="IPR008932">
    <property type="entry name" value="Ribosomal_bL12_oligo"/>
</dbReference>
<dbReference type="InterPro" id="IPR036235">
    <property type="entry name" value="Ribosomal_bL12_oligo_N_sf"/>
</dbReference>
<dbReference type="NCBIfam" id="TIGR00855">
    <property type="entry name" value="L12"/>
    <property type="match status" value="1"/>
</dbReference>
<dbReference type="PANTHER" id="PTHR45987">
    <property type="entry name" value="39S RIBOSOMAL PROTEIN L12"/>
    <property type="match status" value="1"/>
</dbReference>
<dbReference type="PANTHER" id="PTHR45987:SF4">
    <property type="entry name" value="LARGE RIBOSOMAL SUBUNIT PROTEIN BL12M"/>
    <property type="match status" value="1"/>
</dbReference>
<dbReference type="Pfam" id="PF00542">
    <property type="entry name" value="Ribosomal_L12"/>
    <property type="match status" value="1"/>
</dbReference>
<dbReference type="Pfam" id="PF16320">
    <property type="entry name" value="Ribosomal_L12_N"/>
    <property type="match status" value="1"/>
</dbReference>
<dbReference type="SUPFAM" id="SSF54736">
    <property type="entry name" value="ClpS-like"/>
    <property type="match status" value="1"/>
</dbReference>
<dbReference type="SUPFAM" id="SSF48300">
    <property type="entry name" value="Ribosomal protein L7/12, oligomerisation (N-terminal) domain"/>
    <property type="match status" value="1"/>
</dbReference>
<reference key="1">
    <citation type="submission" date="2007-09" db="EMBL/GenBank/DDBJ databases">
        <title>Complete genome sequence of Rickettsia akari.</title>
        <authorList>
            <person name="Madan A."/>
            <person name="Fahey J."/>
            <person name="Helton E."/>
            <person name="Ketteman M."/>
            <person name="Madan A."/>
            <person name="Rodrigues S."/>
            <person name="Sanchez A."/>
            <person name="Whiting M."/>
            <person name="Dasch G."/>
            <person name="Eremeeva M."/>
        </authorList>
    </citation>
    <scope>NUCLEOTIDE SEQUENCE [LARGE SCALE GENOMIC DNA]</scope>
    <source>
        <strain>Hartford</strain>
    </source>
</reference>
<evidence type="ECO:0000255" key="1">
    <source>
        <dbReference type="HAMAP-Rule" id="MF_00368"/>
    </source>
</evidence>
<evidence type="ECO:0000305" key="2"/>
<organism>
    <name type="scientific">Rickettsia akari (strain Hartford)</name>
    <dbReference type="NCBI Taxonomy" id="293614"/>
    <lineage>
        <taxon>Bacteria</taxon>
        <taxon>Pseudomonadati</taxon>
        <taxon>Pseudomonadota</taxon>
        <taxon>Alphaproteobacteria</taxon>
        <taxon>Rickettsiales</taxon>
        <taxon>Rickettsiaceae</taxon>
        <taxon>Rickettsieae</taxon>
        <taxon>Rickettsia</taxon>
        <taxon>spotted fever group</taxon>
    </lineage>
</organism>
<sequence>MADLAKIEEQLSSLTLMQAAELVKMLEEKWCVSAAAPVAVAAAGAAPAAEAVAEKTEFEIVLIAAGDKKVEVIKAVKDITGLGLIEAKKLVDEAPKLMKSNVKKAEAEEIKGKLEAAGAKVELK</sequence>
<feature type="chain" id="PRO_1000007074" description="Large ribosomal subunit protein bL12">
    <location>
        <begin position="1"/>
        <end position="124"/>
    </location>
</feature>
<accession>A8GMA6</accession>
<proteinExistence type="inferred from homology"/>